<comment type="function">
    <molecule>Outer capsid protein VP4</molecule>
    <text evidence="1">Spike-forming protein that mediates virion attachment to the host epithelial cell receptors and plays a major role in cell penetration, determination of host range restriction and virulence. Rotavirus attachment and entry into the host cell probably involves multiple sequential contacts between the outer capsid proteins VP4 and VP7, and the cell receptors. It is subsequently lost, together with VP7, following virus entry into the host cell. Following entry into the host cell, low intracellular or intravesicular Ca(2+) concentration probably causes the calcium-stabilized VP7 trimers to dissociate from the virion. This step is probably necessary for the membrane-disrupting entry step and the release of VP4, which is locked onto the virion by VP7. During the virus exit from the host cell, VP4 seems to be required to target the newly formed virions to the host cell lipid rafts.</text>
</comment>
<comment type="function">
    <molecule>Outer capsid protein VP5*</molecule>
    <text evidence="1">Forms the spike 'foot' and 'body' and acts as a membrane permeabilization protein that mediates release of viral particles from endosomal compartments into the cytoplasm. During entry, the part of VP5* that protrudes from the virus folds back on itself and reorganizes from a local dimer to a trimer. This reorganization may be linked to membrane penetration by exposing VP5* hydrophobic region. In integrin-dependent strains, VP5* targets the integrin heterodimer ITGA2/ITGB1 for cell attachment.</text>
</comment>
<comment type="function">
    <molecule>Outer capsid protein VP8*</molecule>
    <text evidence="1">Forms the head of the spikes and mediates the recognition of specific host cell surface glycans. It is the viral hemagglutinin and an important target of neutralizing antibodies. In sialic acid-dependent strains, VP8* binds to host cell sialic acid, most probably a ganglioside, providing the initial contact. In some other strains, VP8* mediates the attachment to histo-blood group antigens (HBGAs) for viral entry.</text>
</comment>
<comment type="subunit">
    <molecule>Outer capsid protein VP4</molecule>
    <text evidence="1">Homotrimer. VP4 adopts a dimeric appearance above the capsid surface, while forming a trimeric base anchored inside the capsid layer. Only hints of the third molecule are observed above the capsid surface. It probably performs a series of molecular rearrangements during viral entry. Prior to trypsin cleavage, it is flexible. The priming trypsin cleavage triggers its rearrangement into rigid spikes with approximate two-fold symmetry of their protruding parts. After an unknown second triggering event, cleaved VP4 may undergo another rearrangement, in which two VP5* subunits fold back on themselves and join a third subunit to form a tightly associated trimer, shaped like a folded umbrella. Interacts with VP6. Interacts with VP7.</text>
</comment>
<comment type="subunit">
    <molecule>Outer capsid protein VP5*</molecule>
    <text evidence="1">Homotrimer. The trimer is coiled-coil stabilized by its C-terminus, however, its N-terminus, known as antigen domain or 'body', seems to be flexible allowing it to self-associate either as a dimer or a trimer.</text>
</comment>
<comment type="subcellular location">
    <molecule>Outer capsid protein VP4</molecule>
    <subcellularLocation>
        <location evidence="1">Virion</location>
    </subcellularLocation>
    <subcellularLocation>
        <location evidence="1">Host rough endoplasmic reticulum</location>
    </subcellularLocation>
    <subcellularLocation>
        <location evidence="1">Host cell membrane</location>
    </subcellularLocation>
    <subcellularLocation>
        <location evidence="1">Host cytoplasm</location>
        <location evidence="1">Host cytoskeleton</location>
    </subcellularLocation>
    <subcellularLocation>
        <location evidence="1">Host endoplasmic reticulum-Golgi intermediate compartment</location>
    </subcellularLocation>
    <text evidence="1">The outer layer contains 180 copies of VP4, grouped as 60 dimers. Immature double-layered particles assembled in the cytoplasm bud across the membrane of the endoplasmic reticulum, acquiring during this process a transient lipid membrane that is modified with the ER resident viral glycoproteins NSP4 and VP7; these enveloped particles also contain VP4. As the particles move towards the interior of the ER cisternae, the transient lipid membrane and the non-structural protein NSP4 are lost, while the virus surface proteins VP4 and VP7 rearrange to form the outermost virus protein layer, yielding mature infectious triple-layered particles. VP4 also seems to associate with lipid rafts of the host cell membrane probably for the exit of the virus from the infected cell by an alternate pathway.</text>
</comment>
<comment type="subcellular location">
    <molecule>Outer capsid protein VP8*</molecule>
    <subcellularLocation>
        <location evidence="1">Virion</location>
    </subcellularLocation>
    <text evidence="1">Outer capsid protein.</text>
</comment>
<comment type="subcellular location">
    <molecule>Outer capsid protein VP5*</molecule>
    <subcellularLocation>
        <location evidence="1">Virion</location>
    </subcellularLocation>
    <text evidence="1">Outer capsid protein.</text>
</comment>
<comment type="domain">
    <molecule>Outer capsid protein VP4</molecule>
    <text evidence="1">The VP4 spike is divided into a foot, a stalk and body, and a head.</text>
</comment>
<comment type="PTM">
    <molecule>Outer capsid protein VP4</molecule>
    <text evidence="1">Proteolytic cleavage by trypsin results in activation of VP4 functions and greatly increases infectivity. The penetration into the host cell is dependent on trypsin treatment of VP4. It produces two peptides, VP5* and VP8* that remain associated with the virion. Cleavage of VP4 by trypsin probably occurs in vivo in the lumen of the intestine prior to infection of enterocytes. Trypsin seems to be incorporated into the three-layered viral particles but remains inactive as long as the viral outer capsid is intact and would only be activated upon the solubilization of the latter.</text>
</comment>
<comment type="miscellaneous">
    <text evidence="2 3">This strain probably does not use sialic acid to attach to the host cell.</text>
</comment>
<comment type="miscellaneous">
    <text evidence="1">In group A rotaviruses, VP4 defines the P serotype.</text>
</comment>
<comment type="miscellaneous">
    <text evidence="1">Some rotavirus strains are neuraminidase-sensitive and require sialic acid to attach to the cell surface. Some rotavirus strains are integrin-dependent. Some rotavirus strains depend on ganglioside for their entry into the host cell. Hsp70 also seems to be involved in the entry of some strains.</text>
</comment>
<comment type="similarity">
    <text evidence="1">Belongs to the rotavirus VP4 family.</text>
</comment>
<evidence type="ECO:0000255" key="1">
    <source>
        <dbReference type="HAMAP-Rule" id="MF_04132"/>
    </source>
</evidence>
<evidence type="ECO:0000269" key="2">
    <source>
    </source>
</evidence>
<evidence type="ECO:0000303" key="3">
    <source>
    </source>
</evidence>
<evidence type="ECO:0007744" key="4">
    <source>
        <dbReference type="PDB" id="5CAZ"/>
    </source>
</evidence>
<evidence type="ECO:0007744" key="5">
    <source>
        <dbReference type="PDB" id="5CB7"/>
    </source>
</evidence>
<evidence type="ECO:0007829" key="6">
    <source>
        <dbReference type="PDB" id="5CB7"/>
    </source>
</evidence>
<organismHost>
    <name type="scientific">Homo sapiens</name>
    <name type="common">Human</name>
    <dbReference type="NCBI Taxonomy" id="9606"/>
</organismHost>
<organism>
    <name type="scientific">Rotavirus A (strain RVA/Human/Japan/K8/1977/G1P3A[9])</name>
    <name type="common">RV-A</name>
    <dbReference type="NCBI Taxonomy" id="39012"/>
    <lineage>
        <taxon>Viruses</taxon>
        <taxon>Riboviria</taxon>
        <taxon>Orthornavirae</taxon>
        <taxon>Duplornaviricota</taxon>
        <taxon>Resentoviricetes</taxon>
        <taxon>Reovirales</taxon>
        <taxon>Sedoreoviridae</taxon>
        <taxon>Rotavirus</taxon>
        <taxon>Rotavirus A</taxon>
    </lineage>
</organism>
<keyword id="KW-0002">3D-structure</keyword>
<keyword id="KW-0167">Capsid protein</keyword>
<keyword id="KW-0175">Coiled coil</keyword>
<keyword id="KW-1015">Disulfide bond</keyword>
<keyword id="KW-0348">Hemagglutinin</keyword>
<keyword id="KW-1032">Host cell membrane</keyword>
<keyword id="KW-1035">Host cytoplasm</keyword>
<keyword id="KW-1037">Host cytoskeleton</keyword>
<keyword id="KW-1038">Host endoplasmic reticulum</keyword>
<keyword id="KW-1043">Host membrane</keyword>
<keyword id="KW-0945">Host-virus interaction</keyword>
<keyword id="KW-0472">Membrane</keyword>
<keyword id="KW-1152">Outer capsid protein</keyword>
<keyword id="KW-1161">Viral attachment to host cell</keyword>
<keyword id="KW-1162">Viral penetration into host cytoplasm</keyword>
<keyword id="KW-1173">Viral penetration via permeabilization of host membrane</keyword>
<keyword id="KW-0946">Virion</keyword>
<keyword id="KW-1160">Virus entry into host cell</keyword>
<accession>Q01641</accession>
<proteinExistence type="evidence at protein level"/>
<dbReference type="EMBL" id="D90260">
    <property type="protein sequence ID" value="BAA14307.1"/>
    <property type="molecule type" value="Genomic_RNA"/>
</dbReference>
<dbReference type="PDB" id="5CAZ">
    <property type="method" value="X-ray"/>
    <property type="resolution" value="1.80 A"/>
    <property type="chains" value="A=64-224"/>
</dbReference>
<dbReference type="PDB" id="5CB7">
    <property type="method" value="X-ray"/>
    <property type="resolution" value="1.35 A"/>
    <property type="chains" value="A/B=64-224"/>
</dbReference>
<dbReference type="PDBsum" id="5CAZ"/>
<dbReference type="PDBsum" id="5CB7"/>
<dbReference type="SMR" id="Q01641"/>
<dbReference type="UniLectin" id="Q01641"/>
<dbReference type="GO" id="GO:0044172">
    <property type="term" value="C:host cell endoplasmic reticulum-Golgi intermediate compartment"/>
    <property type="evidence" value="ECO:0007669"/>
    <property type="project" value="UniProtKB-SubCell"/>
</dbReference>
<dbReference type="GO" id="GO:0020002">
    <property type="term" value="C:host cell plasma membrane"/>
    <property type="evidence" value="ECO:0007669"/>
    <property type="project" value="UniProtKB-SubCell"/>
</dbReference>
<dbReference type="GO" id="GO:0044168">
    <property type="term" value="C:host cell rough endoplasmic reticulum"/>
    <property type="evidence" value="ECO:0007669"/>
    <property type="project" value="UniProtKB-SubCell"/>
</dbReference>
<dbReference type="GO" id="GO:0044163">
    <property type="term" value="C:host cytoskeleton"/>
    <property type="evidence" value="ECO:0007669"/>
    <property type="project" value="UniProtKB-SubCell"/>
</dbReference>
<dbReference type="GO" id="GO:0016020">
    <property type="term" value="C:membrane"/>
    <property type="evidence" value="ECO:0007669"/>
    <property type="project" value="UniProtKB-KW"/>
</dbReference>
<dbReference type="GO" id="GO:0039624">
    <property type="term" value="C:viral outer capsid"/>
    <property type="evidence" value="ECO:0007669"/>
    <property type="project" value="UniProtKB-UniRule"/>
</dbReference>
<dbReference type="GO" id="GO:0039665">
    <property type="term" value="P:permeabilization of host organelle membrane involved in viral entry into host cell"/>
    <property type="evidence" value="ECO:0007669"/>
    <property type="project" value="UniProtKB-UniRule"/>
</dbReference>
<dbReference type="GO" id="GO:0019062">
    <property type="term" value="P:virion attachment to host cell"/>
    <property type="evidence" value="ECO:0007669"/>
    <property type="project" value="UniProtKB-UniRule"/>
</dbReference>
<dbReference type="Gene3D" id="1.20.5.170">
    <property type="match status" value="1"/>
</dbReference>
<dbReference type="Gene3D" id="2.60.120.200">
    <property type="match status" value="1"/>
</dbReference>
<dbReference type="HAMAP" id="MF_04132">
    <property type="entry name" value="Rota_A_VP4"/>
    <property type="match status" value="1"/>
</dbReference>
<dbReference type="HAMAP" id="MF_04125">
    <property type="entry name" value="Rota_VP4"/>
    <property type="match status" value="1"/>
</dbReference>
<dbReference type="InterPro" id="IPR013320">
    <property type="entry name" value="ConA-like_dom_sf"/>
</dbReference>
<dbReference type="InterPro" id="IPR042546">
    <property type="entry name" value="Rota_A_VP4"/>
</dbReference>
<dbReference type="InterPro" id="IPR035330">
    <property type="entry name" value="Rota_VP4_MID"/>
</dbReference>
<dbReference type="InterPro" id="IPR038017">
    <property type="entry name" value="Rota_VP4_MID_sf"/>
</dbReference>
<dbReference type="InterPro" id="IPR000416">
    <property type="entry name" value="VP4_concanavalin-like"/>
</dbReference>
<dbReference type="InterPro" id="IPR035329">
    <property type="entry name" value="VP4_helical"/>
</dbReference>
<dbReference type="Pfam" id="PF17477">
    <property type="entry name" value="Rota_VP4_MID"/>
    <property type="match status" value="1"/>
</dbReference>
<dbReference type="Pfam" id="PF00426">
    <property type="entry name" value="VP4_haemagglut"/>
    <property type="match status" value="1"/>
</dbReference>
<dbReference type="Pfam" id="PF17478">
    <property type="entry name" value="VP4_helical"/>
    <property type="match status" value="1"/>
</dbReference>
<dbReference type="SUPFAM" id="SSF49899">
    <property type="entry name" value="Concanavalin A-like lectins/glucanases"/>
    <property type="match status" value="1"/>
</dbReference>
<dbReference type="SUPFAM" id="SSF111379">
    <property type="entry name" value="VP4 membrane interaction domain"/>
    <property type="match status" value="1"/>
</dbReference>
<name>VP4_ROTHJ</name>
<protein>
    <recommendedName>
        <fullName evidence="1">Outer capsid protein VP4</fullName>
    </recommendedName>
    <alternativeName>
        <fullName evidence="1">Hemagglutinin</fullName>
    </alternativeName>
    <component>
        <recommendedName>
            <fullName evidence="1">Outer capsid protein VP8*</fullName>
        </recommendedName>
    </component>
    <component>
        <recommendedName>
            <fullName evidence="1">Outer capsid protein VP5*</fullName>
        </recommendedName>
    </component>
</protein>
<reference key="1">
    <citation type="journal article" date="1989" name="J. Virol.">
        <title>Complete nucleotide sequence of the gene encoding VP4 of a human rotavirus (strain K8) which has unique VP4 neutralization epitopes.</title>
        <authorList>
            <person name="Taniguchi K."/>
            <person name="Nishikawa K."/>
            <person name="Urasawa T."/>
            <person name="Urasawa S."/>
            <person name="Midthun K."/>
            <person name="Kapikian A.Z."/>
            <person name="Gorziglia M."/>
        </authorList>
    </citation>
    <scope>NUCLEOTIDE SEQUENCE [GENOMIC RNA]</scope>
</reference>
<reference key="2">
    <citation type="journal article" date="2002" name="J. Virol.">
        <title>Initial interaction of rotavirus strains with N-acetylneuraminic (sialic) acid residues on the cell surface correlates with VP4 genotype, not species of origin.</title>
        <authorList>
            <person name="Ciarlet M."/>
            <person name="Ludert J.E."/>
            <person name="Iturriza-Gomara M."/>
            <person name="Liprandi F."/>
            <person name="Gray J.J."/>
            <person name="Desselberger U."/>
            <person name="Estes M.K."/>
        </authorList>
    </citation>
    <scope>SIALIC ACID INDEPENDENCY</scope>
</reference>
<reference key="3">
    <citation type="journal article" date="2006" name="Glycoconj. J.">
        <title>Role of sialic acids in rotavirus infection.</title>
        <authorList>
            <person name="Isa P."/>
            <person name="Arias C.F."/>
            <person name="Lopez S."/>
        </authorList>
    </citation>
    <scope>REVIEW</scope>
</reference>
<reference evidence="4 5" key="4">
    <citation type="journal article" date="2015" name="ChemBioChem">
        <title>Substantial Receptor-induced Structural Rearrangement of Rotavirus VP8*: Potential Implications for Cross-Species Infection.</title>
        <authorList>
            <person name="Yu X."/>
            <person name="Mishra R."/>
            <person name="Holloway G."/>
            <person name="von Itzstein M."/>
            <person name="Coulson B.S."/>
            <person name="Blanchard H."/>
        </authorList>
    </citation>
    <scope>X-RAY CRYSTALLOGRAPHY (1.35 ANGSTROMS) OF 64-224 IN COMPLEX WITH FUCOSE AND GALACTOSE</scope>
</reference>
<sequence>MASLIYRQLLSNSYVTNISDEVNEIGTKKTTNVTVNPGPFAQTGYAPVDWGHGELPDSTLVQPTLDGPYQPTSLNLPVDYWMLIAPTREGKVAEGTNTTDRWFACVLVEPNVQNTQRQYVLDGQNVQLHVSNDSSTSWKFILFIKLTPYGTYTQYSTLSTPHKLCAWMKRDNRVYWYQGATPNASESYYLTINNDNSNVSSDAEFYLIPQSQTAMCTQYINNGLPPIQNTRNIVPVNITSRQIKDVRAQMNEDIVISKTSLWKEMQYNRDIIIRFKFANSIIKSGGLGYKWSEISFKPMNYQYTYTRDEEEVTAHTTCSVNGVNDFNYNGGTLPTDFAISRFEVIKENSYVYVDYWDDSQAFRNMVYVRSLAANLNDVVCSGGSYSFALPVGNHPVMSGGAVTLTSAGVTLSTQYTDYVSLNSLQFRFRLAVSEPSFSISRTRMSGIYGLPAVNPNNSAEYYEIAGRFSLISLVPTNDDYQTPIANSVTVRQDLERQLGELREEFNSLSQEIAVSQLIDLATLPLDMFSMFSGIKSTVEAVKSMTTNVMKRFKTSSLANAISDLTSNMSEAASSVRLTSVRSVGTITLPRARVSLQVGDDLRSMQDVSTQVSNVSRNLRLKEFTTQTDTLSFDDISAAVLKTKLDKSTQISQQTMPDIIAESSEKFIPKRSYRIVDEDIRFETGIDGTFYAYKVDTFNEIPFDMERFNKLITDSPVLSAIIDFKTLKNLNDNYGITKKQAMELLHSNPKTLKEFINNNNPIIRNRIENLISQCRL</sequence>
<feature type="chain" id="PRO_0000041057" description="Outer capsid protein VP4" evidence="1">
    <location>
        <begin position="1"/>
        <end position="775"/>
    </location>
</feature>
<feature type="chain" id="PRO_0000041058" description="Outer capsid protein VP8*" evidence="1">
    <location>
        <begin position="1"/>
        <end position="231"/>
    </location>
</feature>
<feature type="chain" id="PRO_0000041059" description="Outer capsid protein VP5*" evidence="1">
    <location>
        <begin position="248"/>
        <end position="775"/>
    </location>
</feature>
<feature type="region of interest" description="Spike head" evidence="1">
    <location>
        <begin position="65"/>
        <end position="224"/>
    </location>
</feature>
<feature type="region of interest" description="Spike body and stalk (antigen domain)" evidence="1">
    <location>
        <begin position="248"/>
        <end position="479"/>
    </location>
</feature>
<feature type="region of interest" description="Hydrophobic; possible role in virus entry into host cell" evidence="1">
    <location>
        <begin position="389"/>
        <end position="409"/>
    </location>
</feature>
<feature type="region of interest" description="Spike foot" evidence="1">
    <location>
        <begin position="510"/>
        <end position="775"/>
    </location>
</feature>
<feature type="coiled-coil region" evidence="1">
    <location>
        <begin position="484"/>
        <end position="511"/>
    </location>
</feature>
<feature type="short sequence motif" description="YGL motif; interaction with ITGA4" evidence="1">
    <location>
        <begin position="448"/>
        <end position="450"/>
    </location>
</feature>
<feature type="site" description="Cleavage" evidence="1">
    <location>
        <begin position="231"/>
        <end position="232"/>
    </location>
</feature>
<feature type="site" description="Cleavage" evidence="1">
    <location>
        <begin position="241"/>
        <end position="242"/>
    </location>
</feature>
<feature type="site" description="Cleavage; associated with enhancement of infectivity" evidence="1">
    <location>
        <begin position="247"/>
        <end position="248"/>
    </location>
</feature>
<feature type="disulfide bond" evidence="1">
    <location>
        <begin position="318"/>
        <end position="380"/>
    </location>
</feature>
<feature type="strand" evidence="6">
    <location>
        <begin position="66"/>
        <end position="69"/>
    </location>
</feature>
<feature type="strand" evidence="6">
    <location>
        <begin position="71"/>
        <end position="75"/>
    </location>
</feature>
<feature type="strand" evidence="6">
    <location>
        <begin position="80"/>
        <end position="85"/>
    </location>
</feature>
<feature type="strand" evidence="6">
    <location>
        <begin position="87"/>
        <end position="96"/>
    </location>
</feature>
<feature type="strand" evidence="6">
    <location>
        <begin position="98"/>
        <end position="100"/>
    </location>
</feature>
<feature type="strand" evidence="6">
    <location>
        <begin position="102"/>
        <end position="108"/>
    </location>
</feature>
<feature type="strand" evidence="6">
    <location>
        <begin position="110"/>
        <end position="121"/>
    </location>
</feature>
<feature type="strand" evidence="6">
    <location>
        <begin position="124"/>
        <end position="132"/>
    </location>
</feature>
<feature type="strand" evidence="6">
    <location>
        <begin position="138"/>
        <end position="147"/>
    </location>
</feature>
<feature type="strand" evidence="6">
    <location>
        <begin position="153"/>
        <end position="160"/>
    </location>
</feature>
<feature type="strand" evidence="6">
    <location>
        <begin position="165"/>
        <end position="170"/>
    </location>
</feature>
<feature type="strand" evidence="6">
    <location>
        <begin position="173"/>
        <end position="180"/>
    </location>
</feature>
<feature type="strand" evidence="6">
    <location>
        <begin position="185"/>
        <end position="191"/>
    </location>
</feature>
<feature type="strand" evidence="6">
    <location>
        <begin position="198"/>
        <end position="209"/>
    </location>
</feature>
<feature type="helix" evidence="6">
    <location>
        <begin position="210"/>
        <end position="212"/>
    </location>
</feature>
<feature type="helix" evidence="6">
    <location>
        <begin position="213"/>
        <end position="222"/>
    </location>
</feature>